<keyword id="KW-1185">Reference proteome</keyword>
<keyword id="KW-0833">Ubl conjugation pathway</keyword>
<name>UFC1_ANOGA</name>
<sequence length="167" mass="19174">MVDDGTRKALSGIPLLKTKAGPRDKELWVQRLKEEYQALIKYVQNNKASDMDWFRLESNKEGTKWFGKCWYMYNLHKYEFDVEFDIPITYPTTSPEIALPELDGKTAKMYRGGKICLTDHFKPLWARNVPKFGIAHAMALGLAPWLAVEVPDLIEKGVISYQEKGSS</sequence>
<feature type="chain" id="PRO_0000391965" description="Ubiquitin-fold modifier-conjugating enzyme 1">
    <location>
        <begin position="1"/>
        <end position="167"/>
    </location>
</feature>
<feature type="active site" description="Glycyl thioester intermediate" evidence="1">
    <location>
        <position position="116"/>
    </location>
</feature>
<gene>
    <name type="ORF">AGAP008099</name>
</gene>
<reference key="1">
    <citation type="journal article" date="2002" name="Science">
        <title>The genome sequence of the malaria mosquito Anopheles gambiae.</title>
        <authorList>
            <person name="Holt R.A."/>
            <person name="Subramanian G.M."/>
            <person name="Halpern A."/>
            <person name="Sutton G.G."/>
            <person name="Charlab R."/>
            <person name="Nusskern D.R."/>
            <person name="Wincker P."/>
            <person name="Clark A.G."/>
            <person name="Ribeiro J.M.C."/>
            <person name="Wides R."/>
            <person name="Salzberg S.L."/>
            <person name="Loftus B.J."/>
            <person name="Yandell M.D."/>
            <person name="Majoros W.H."/>
            <person name="Rusch D.B."/>
            <person name="Lai Z."/>
            <person name="Kraft C.L."/>
            <person name="Abril J.F."/>
            <person name="Anthouard V."/>
            <person name="Arensburger P."/>
            <person name="Atkinson P.W."/>
            <person name="Baden H."/>
            <person name="de Berardinis V."/>
            <person name="Baldwin D."/>
            <person name="Benes V."/>
            <person name="Biedler J."/>
            <person name="Blass C."/>
            <person name="Bolanos R."/>
            <person name="Boscus D."/>
            <person name="Barnstead M."/>
            <person name="Cai S."/>
            <person name="Center A."/>
            <person name="Chaturverdi K."/>
            <person name="Christophides G.K."/>
            <person name="Chrystal M.A.M."/>
            <person name="Clamp M."/>
            <person name="Cravchik A."/>
            <person name="Curwen V."/>
            <person name="Dana A."/>
            <person name="Delcher A."/>
            <person name="Dew I."/>
            <person name="Evans C.A."/>
            <person name="Flanigan M."/>
            <person name="Grundschober-Freimoser A."/>
            <person name="Friedli L."/>
            <person name="Gu Z."/>
            <person name="Guan P."/>
            <person name="Guigo R."/>
            <person name="Hillenmeyer M.E."/>
            <person name="Hladun S.L."/>
            <person name="Hogan J.R."/>
            <person name="Hong Y.S."/>
            <person name="Hoover J."/>
            <person name="Jaillon O."/>
            <person name="Ke Z."/>
            <person name="Kodira C.D."/>
            <person name="Kokoza E."/>
            <person name="Koutsos A."/>
            <person name="Letunic I."/>
            <person name="Levitsky A.A."/>
            <person name="Liang Y."/>
            <person name="Lin J.-J."/>
            <person name="Lobo N.F."/>
            <person name="Lopez J.R."/>
            <person name="Malek J.A."/>
            <person name="McIntosh T.C."/>
            <person name="Meister S."/>
            <person name="Miller J.R."/>
            <person name="Mobarry C."/>
            <person name="Mongin E."/>
            <person name="Murphy S.D."/>
            <person name="O'Brochta D.A."/>
            <person name="Pfannkoch C."/>
            <person name="Qi R."/>
            <person name="Regier M.A."/>
            <person name="Remington K."/>
            <person name="Shao H."/>
            <person name="Sharakhova M.V."/>
            <person name="Sitter C.D."/>
            <person name="Shetty J."/>
            <person name="Smith T.J."/>
            <person name="Strong R."/>
            <person name="Sun J."/>
            <person name="Thomasova D."/>
            <person name="Ton L.Q."/>
            <person name="Topalis P."/>
            <person name="Tu Z.J."/>
            <person name="Unger M.F."/>
            <person name="Walenz B."/>
            <person name="Wang A.H."/>
            <person name="Wang J."/>
            <person name="Wang M."/>
            <person name="Wang X."/>
            <person name="Woodford K.J."/>
            <person name="Wortman J.R."/>
            <person name="Wu M."/>
            <person name="Yao A."/>
            <person name="Zdobnov E.M."/>
            <person name="Zhang H."/>
            <person name="Zhao Q."/>
            <person name="Zhao S."/>
            <person name="Zhu S.C."/>
            <person name="Zhimulev I."/>
            <person name="Coluzzi M."/>
            <person name="della Torre A."/>
            <person name="Roth C.W."/>
            <person name="Louis C."/>
            <person name="Kalush F."/>
            <person name="Mural R.J."/>
            <person name="Myers E.W."/>
            <person name="Adams M.D."/>
            <person name="Smith H.O."/>
            <person name="Broder S."/>
            <person name="Gardner M.J."/>
            <person name="Fraser C.M."/>
            <person name="Birney E."/>
            <person name="Bork P."/>
            <person name="Brey P.T."/>
            <person name="Venter J.C."/>
            <person name="Weissenbach J."/>
            <person name="Kafatos F.C."/>
            <person name="Collins F.H."/>
            <person name="Hoffman S.L."/>
        </authorList>
    </citation>
    <scope>NUCLEOTIDE SEQUENCE [LARGE SCALE GENOMIC DNA]</scope>
    <source>
        <strain>PEST</strain>
    </source>
</reference>
<accession>Q7PND3</accession>
<dbReference type="EMBL" id="AAAB01008964">
    <property type="protein sequence ID" value="EAA12363.4"/>
    <property type="molecule type" value="Genomic_DNA"/>
</dbReference>
<dbReference type="RefSeq" id="XP_317357.3">
    <property type="nucleotide sequence ID" value="XM_317357.3"/>
</dbReference>
<dbReference type="SMR" id="Q7PND3"/>
<dbReference type="FunCoup" id="Q7PND3">
    <property type="interactions" value="1646"/>
</dbReference>
<dbReference type="STRING" id="7165.Q7PND3"/>
<dbReference type="PaxDb" id="7165-AGAP008099-PA"/>
<dbReference type="EnsemblMetazoa" id="AGAP008099-RA">
    <property type="protein sequence ID" value="AGAP008099-PA"/>
    <property type="gene ID" value="AGAP008099"/>
</dbReference>
<dbReference type="GeneID" id="1277852"/>
<dbReference type="KEGG" id="aga:1277852"/>
<dbReference type="CTD" id="51506"/>
<dbReference type="VEuPathDB" id="VectorBase:AGAMI1_011159"/>
<dbReference type="VEuPathDB" id="VectorBase:AGAP008099"/>
<dbReference type="eggNOG" id="KOG3357">
    <property type="taxonomic scope" value="Eukaryota"/>
</dbReference>
<dbReference type="HOGENOM" id="CLU_101170_0_0_1"/>
<dbReference type="InParanoid" id="Q7PND3"/>
<dbReference type="OMA" id="LWQKNVP"/>
<dbReference type="PhylomeDB" id="Q7PND3"/>
<dbReference type="Proteomes" id="UP000007062">
    <property type="component" value="Chromosome 3R"/>
</dbReference>
<dbReference type="GO" id="GO:0061657">
    <property type="term" value="F:UFM1 conjugating enzyme activity"/>
    <property type="evidence" value="ECO:0007669"/>
    <property type="project" value="InterPro"/>
</dbReference>
<dbReference type="GO" id="GO:0071568">
    <property type="term" value="F:UFM1 transferase activity"/>
    <property type="evidence" value="ECO:0000318"/>
    <property type="project" value="GO_Central"/>
</dbReference>
<dbReference type="GO" id="GO:0071569">
    <property type="term" value="P:protein ufmylation"/>
    <property type="evidence" value="ECO:0007669"/>
    <property type="project" value="InterPro"/>
</dbReference>
<dbReference type="GO" id="GO:0034976">
    <property type="term" value="P:response to endoplasmic reticulum stress"/>
    <property type="evidence" value="ECO:0000318"/>
    <property type="project" value="GO_Central"/>
</dbReference>
<dbReference type="GO" id="GO:0061709">
    <property type="term" value="P:reticulophagy"/>
    <property type="evidence" value="ECO:0000318"/>
    <property type="project" value="GO_Central"/>
</dbReference>
<dbReference type="CDD" id="cd11686">
    <property type="entry name" value="UBCc_UFC1"/>
    <property type="match status" value="1"/>
</dbReference>
<dbReference type="FunFam" id="3.10.110.10:FF:000042">
    <property type="entry name" value="Ubiquitin-fold modifier-conjugating enzyme 1"/>
    <property type="match status" value="1"/>
</dbReference>
<dbReference type="Gene3D" id="3.10.110.10">
    <property type="entry name" value="Ubiquitin Conjugating Enzyme"/>
    <property type="match status" value="1"/>
</dbReference>
<dbReference type="InterPro" id="IPR016135">
    <property type="entry name" value="UBQ-conjugating_enzyme/RWD"/>
</dbReference>
<dbReference type="InterPro" id="IPR014806">
    <property type="entry name" value="Ufc1"/>
</dbReference>
<dbReference type="PANTHER" id="PTHR12921">
    <property type="entry name" value="UBIQUITIN-FOLD MODIFIER-CONJUGATING ENZYME 1"/>
    <property type="match status" value="1"/>
</dbReference>
<dbReference type="PANTHER" id="PTHR12921:SF0">
    <property type="entry name" value="UBIQUITIN-FOLD MODIFIER-CONJUGATING ENZYME 1"/>
    <property type="match status" value="1"/>
</dbReference>
<dbReference type="Pfam" id="PF08694">
    <property type="entry name" value="UFC1"/>
    <property type="match status" value="1"/>
</dbReference>
<dbReference type="PIRSF" id="PIRSF008716">
    <property type="entry name" value="DUF1782"/>
    <property type="match status" value="1"/>
</dbReference>
<dbReference type="SUPFAM" id="SSF54495">
    <property type="entry name" value="UBC-like"/>
    <property type="match status" value="1"/>
</dbReference>
<proteinExistence type="inferred from homology"/>
<organism>
    <name type="scientific">Anopheles gambiae</name>
    <name type="common">African malaria mosquito</name>
    <dbReference type="NCBI Taxonomy" id="7165"/>
    <lineage>
        <taxon>Eukaryota</taxon>
        <taxon>Metazoa</taxon>
        <taxon>Ecdysozoa</taxon>
        <taxon>Arthropoda</taxon>
        <taxon>Hexapoda</taxon>
        <taxon>Insecta</taxon>
        <taxon>Pterygota</taxon>
        <taxon>Neoptera</taxon>
        <taxon>Endopterygota</taxon>
        <taxon>Diptera</taxon>
        <taxon>Nematocera</taxon>
        <taxon>Culicoidea</taxon>
        <taxon>Culicidae</taxon>
        <taxon>Anophelinae</taxon>
        <taxon>Anopheles</taxon>
    </lineage>
</organism>
<comment type="function">
    <text evidence="1">E2-like enzyme which forms an intermediate with UFM1 via a thioester linkage.</text>
</comment>
<comment type="similarity">
    <text evidence="2">Belongs to the ubiquitin-conjugating enzyme family. UFC1 subfamily.</text>
</comment>
<evidence type="ECO:0000250" key="1"/>
<evidence type="ECO:0000305" key="2"/>
<protein>
    <recommendedName>
        <fullName>Ubiquitin-fold modifier-conjugating enzyme 1</fullName>
    </recommendedName>
    <alternativeName>
        <fullName>Ufm1-conjugating enzyme 1</fullName>
    </alternativeName>
</protein>